<comment type="subcellular location">
    <subcellularLocation>
        <location evidence="1">Nucleus</location>
    </subcellularLocation>
</comment>
<comment type="alternative products">
    <event type="alternative splicing"/>
    <isoform>
        <id>Q8R4E6-1</id>
        <name>1</name>
        <name>PURG-A</name>
        <sequence type="displayed"/>
    </isoform>
    <isoform>
        <id>Q8R4E6-2</id>
        <name>2</name>
        <name>PURG-A</name>
        <sequence type="described" ref="VSP_021320"/>
    </isoform>
</comment>
<comment type="tissue specificity">
    <text evidence="3">Isoform 1 is expressed in testis. Isoform 2 is expressed in blastocyst and kidney.</text>
</comment>
<comment type="similarity">
    <text evidence="5">Belongs to the PUR DNA-binding protein family.</text>
</comment>
<accession>Q8R4E6</accession>
<accession>Q14B11</accession>
<accession>Q8R4E7</accession>
<proteinExistence type="evidence at protein level"/>
<gene>
    <name type="primary">Purg</name>
</gene>
<dbReference type="EMBL" id="AF479672">
    <property type="protein sequence ID" value="AAL86450.1"/>
    <property type="molecule type" value="mRNA"/>
</dbReference>
<dbReference type="EMBL" id="AF479673">
    <property type="protein sequence ID" value="AAL86451.1"/>
    <property type="molecule type" value="mRNA"/>
</dbReference>
<dbReference type="EMBL" id="BC116406">
    <property type="protein sequence ID" value="AAI16407.1"/>
    <property type="molecule type" value="mRNA"/>
</dbReference>
<dbReference type="CCDS" id="CCDS22230.1">
    <molecule id="Q8R4E6-1"/>
</dbReference>
<dbReference type="CCDS" id="CCDS52538.1">
    <molecule id="Q8R4E6-2"/>
</dbReference>
<dbReference type="RefSeq" id="NP_001091703.1">
    <molecule id="Q8R4E6-2"/>
    <property type="nucleotide sequence ID" value="NM_001098233.1"/>
</dbReference>
<dbReference type="RefSeq" id="NP_001369784.1">
    <molecule id="Q8R4E6-1"/>
    <property type="nucleotide sequence ID" value="NM_001382855.1"/>
</dbReference>
<dbReference type="RefSeq" id="NP_690034.1">
    <molecule id="Q8R4E6-1"/>
    <property type="nucleotide sequence ID" value="NM_152821.2"/>
</dbReference>
<dbReference type="RefSeq" id="XP_006509269.1">
    <property type="nucleotide sequence ID" value="XM_006509206.1"/>
</dbReference>
<dbReference type="RefSeq" id="XP_006509272.1">
    <molecule id="Q8R4E6-2"/>
    <property type="nucleotide sequence ID" value="XM_006509209.5"/>
</dbReference>
<dbReference type="SMR" id="Q8R4E6"/>
<dbReference type="BioGRID" id="217164">
    <property type="interactions" value="1"/>
</dbReference>
<dbReference type="FunCoup" id="Q8R4E6">
    <property type="interactions" value="3242"/>
</dbReference>
<dbReference type="STRING" id="10090.ENSMUSP00000065002"/>
<dbReference type="iPTMnet" id="Q8R4E6"/>
<dbReference type="PhosphoSitePlus" id="Q8R4E6"/>
<dbReference type="SwissPalm" id="Q8R4E6"/>
<dbReference type="PaxDb" id="10090-ENSMUSP00000065002"/>
<dbReference type="PeptideAtlas" id="Q8R4E6"/>
<dbReference type="ProteomicsDB" id="300279">
    <molecule id="Q8R4E6-1"/>
</dbReference>
<dbReference type="ProteomicsDB" id="300280">
    <molecule id="Q8R4E6-2"/>
</dbReference>
<dbReference type="Antibodypedia" id="23258">
    <property type="antibodies" value="84 antibodies from 15 providers"/>
</dbReference>
<dbReference type="DNASU" id="75029"/>
<dbReference type="Ensembl" id="ENSMUST00000070340.6">
    <molecule id="Q8R4E6-1"/>
    <property type="protein sequence ID" value="ENSMUSP00000065002.5"/>
    <property type="gene ID" value="ENSMUSG00000049184.7"/>
</dbReference>
<dbReference type="Ensembl" id="ENSMUST00000078058.5">
    <molecule id="Q8R4E6-2"/>
    <property type="protein sequence ID" value="ENSMUSP00000077205.4"/>
    <property type="gene ID" value="ENSMUSG00000049184.7"/>
</dbReference>
<dbReference type="GeneID" id="75029"/>
<dbReference type="KEGG" id="mmu:75029"/>
<dbReference type="UCSC" id="uc009ljx.1">
    <molecule id="Q8R4E6-1"/>
    <property type="organism name" value="mouse"/>
</dbReference>
<dbReference type="UCSC" id="uc009ljy.1">
    <molecule id="Q8R4E6-2"/>
    <property type="organism name" value="mouse"/>
</dbReference>
<dbReference type="AGR" id="MGI:1922279"/>
<dbReference type="CTD" id="29942"/>
<dbReference type="MGI" id="MGI:1922279">
    <property type="gene designation" value="Purg"/>
</dbReference>
<dbReference type="VEuPathDB" id="HostDB:ENSMUSG00000049184"/>
<dbReference type="eggNOG" id="KOG3074">
    <property type="taxonomic scope" value="Eukaryota"/>
</dbReference>
<dbReference type="GeneTree" id="ENSGT00950000183162"/>
<dbReference type="HOGENOM" id="CLU_057873_1_1_1"/>
<dbReference type="InParanoid" id="Q8R4E6"/>
<dbReference type="OMA" id="FHCCQIQ"/>
<dbReference type="OrthoDB" id="523901at2759"/>
<dbReference type="PhylomeDB" id="Q8R4E6"/>
<dbReference type="TreeFam" id="TF313701"/>
<dbReference type="BioGRID-ORCS" id="75029">
    <property type="hits" value="0 hits in 76 CRISPR screens"/>
</dbReference>
<dbReference type="CD-CODE" id="CE726F99">
    <property type="entry name" value="Postsynaptic density"/>
</dbReference>
<dbReference type="ChiTaRS" id="Purg">
    <property type="organism name" value="mouse"/>
</dbReference>
<dbReference type="PRO" id="PR:Q8R4E6"/>
<dbReference type="Proteomes" id="UP000000589">
    <property type="component" value="Chromosome 8"/>
</dbReference>
<dbReference type="RNAct" id="Q8R4E6">
    <property type="molecule type" value="protein"/>
</dbReference>
<dbReference type="Bgee" id="ENSMUSG00000049184">
    <property type="expression patterns" value="Expressed in barrel cortex and 246 other cell types or tissues"/>
</dbReference>
<dbReference type="GO" id="GO:0005634">
    <property type="term" value="C:nucleus"/>
    <property type="evidence" value="ECO:0007669"/>
    <property type="project" value="UniProtKB-SubCell"/>
</dbReference>
<dbReference type="GO" id="GO:0045202">
    <property type="term" value="C:synapse"/>
    <property type="evidence" value="ECO:0000314"/>
    <property type="project" value="SynGO"/>
</dbReference>
<dbReference type="GO" id="GO:0032422">
    <property type="term" value="F:purine-rich negative regulatory element binding"/>
    <property type="evidence" value="ECO:0007669"/>
    <property type="project" value="InterPro"/>
</dbReference>
<dbReference type="GO" id="GO:0000977">
    <property type="term" value="F:RNA polymerase II transcription regulatory region sequence-specific DNA binding"/>
    <property type="evidence" value="ECO:0007669"/>
    <property type="project" value="InterPro"/>
</dbReference>
<dbReference type="FunFam" id="3.10.450.700:FF:000001">
    <property type="entry name" value="Purine-rich element binding protein A"/>
    <property type="match status" value="1"/>
</dbReference>
<dbReference type="FunFam" id="3.30.2450.30:FF:000002">
    <property type="entry name" value="purine-rich element-binding protein gamma isoform X2"/>
    <property type="match status" value="1"/>
</dbReference>
<dbReference type="Gene3D" id="3.10.450.700">
    <property type="match status" value="1"/>
</dbReference>
<dbReference type="Gene3D" id="3.30.2450.30">
    <property type="match status" value="1"/>
</dbReference>
<dbReference type="InterPro" id="IPR006628">
    <property type="entry name" value="PUR-bd_fam"/>
</dbReference>
<dbReference type="PANTHER" id="PTHR12611">
    <property type="entry name" value="PUR-TRANSCRIPTIONAL ACTIVATOR"/>
    <property type="match status" value="1"/>
</dbReference>
<dbReference type="PANTHER" id="PTHR12611:SF3">
    <property type="entry name" value="PURINE-RICH ELEMENT-BINDING PROTEIN GAMMA"/>
    <property type="match status" value="1"/>
</dbReference>
<dbReference type="Pfam" id="PF04845">
    <property type="entry name" value="PurA"/>
    <property type="match status" value="1"/>
</dbReference>
<dbReference type="SMART" id="SM00712">
    <property type="entry name" value="PUR"/>
    <property type="match status" value="3"/>
</dbReference>
<reference key="1">
    <citation type="journal article" date="2002" name="Nucleic Acids Res.">
        <title>Distinct proteins encoded by alternative transcripts of the PURG gene, located contrapodal to WRN on chromosome 8, determined by differential termination/polyadenylation.</title>
        <authorList>
            <person name="Liu H."/>
            <person name="Johnson E.M."/>
        </authorList>
    </citation>
    <scope>NUCLEOTIDE SEQUENCE [MRNA] (ISOFORMS 1 AND 2)</scope>
    <scope>TISSUE SPECIFICITY</scope>
    <source>
        <strain>B6D2 x J F1</strain>
        <strain>C57BL/6J</strain>
        <tissue>Testis</tissue>
    </source>
</reference>
<reference key="2">
    <citation type="journal article" date="2004" name="Genome Res.">
        <title>The status, quality, and expansion of the NIH full-length cDNA project: the Mammalian Gene Collection (MGC).</title>
        <authorList>
            <consortium name="The MGC Project Team"/>
        </authorList>
    </citation>
    <scope>NUCLEOTIDE SEQUENCE [LARGE SCALE MRNA] (ISOFORM 1)</scope>
</reference>
<reference key="3">
    <citation type="journal article" date="2010" name="Cell">
        <title>A tissue-specific atlas of mouse protein phosphorylation and expression.</title>
        <authorList>
            <person name="Huttlin E.L."/>
            <person name="Jedrychowski M.P."/>
            <person name="Elias J.E."/>
            <person name="Goswami T."/>
            <person name="Rad R."/>
            <person name="Beausoleil S.A."/>
            <person name="Villen J."/>
            <person name="Haas W."/>
            <person name="Sowa M.E."/>
            <person name="Gygi S.P."/>
        </authorList>
    </citation>
    <scope>PHOSPHORYLATION [LARGE SCALE ANALYSIS] AT SER-163; SER-166 AND SER-342</scope>
    <scope>IDENTIFICATION BY MASS SPECTROMETRY [LARGE SCALE ANALYSIS]</scope>
    <source>
        <tissue>Brain</tissue>
        <tissue>Lung</tissue>
    </source>
</reference>
<name>PURG_MOUSE</name>
<protein>
    <recommendedName>
        <fullName>Purine-rich element-binding protein gamma</fullName>
    </recommendedName>
</protein>
<feature type="chain" id="PRO_0000255953" description="Purine-rich element-binding protein gamma">
    <location>
        <begin position="1"/>
        <end position="350"/>
    </location>
</feature>
<feature type="DNA-binding region" evidence="1">
    <location>
        <begin position="54"/>
        <end position="296"/>
    </location>
</feature>
<feature type="region of interest" description="Disordered" evidence="2">
    <location>
        <begin position="1"/>
        <end position="59"/>
    </location>
</feature>
<feature type="region of interest" description="Disordered" evidence="2">
    <location>
        <begin position="136"/>
        <end position="172"/>
    </location>
</feature>
<feature type="compositionally biased region" description="Gly residues" evidence="2">
    <location>
        <begin position="9"/>
        <end position="27"/>
    </location>
</feature>
<feature type="compositionally biased region" description="Polar residues" evidence="2">
    <location>
        <begin position="47"/>
        <end position="59"/>
    </location>
</feature>
<feature type="compositionally biased region" description="Basic and acidic residues" evidence="2">
    <location>
        <begin position="137"/>
        <end position="149"/>
    </location>
</feature>
<feature type="modified residue" description="Phosphoserine" evidence="6">
    <location>
        <position position="163"/>
    </location>
</feature>
<feature type="modified residue" description="Phosphoserine" evidence="6">
    <location>
        <position position="166"/>
    </location>
</feature>
<feature type="modified residue" description="Phosphoserine" evidence="6">
    <location>
        <position position="342"/>
    </location>
</feature>
<feature type="splice variant" id="VSP_021320" description="In isoform 2." evidence="4">
    <original>VSEVRPPYRNTITVPFKAWTRFGENFIKYEEEMRKICNSHKEKRMDGRRASGEEQECLD</original>
    <variation>LTNYPKSRENLNLFHCCQTKHKEQPYDTPKTVEE</variation>
    <location>
        <begin position="292"/>
        <end position="350"/>
    </location>
</feature>
<feature type="sequence conflict" description="In Ref. 2; AAI16407." evidence="5" ref="2">
    <original>D</original>
    <variation>E</variation>
    <location>
        <position position="222"/>
    </location>
</feature>
<keyword id="KW-0025">Alternative splicing</keyword>
<keyword id="KW-0238">DNA-binding</keyword>
<keyword id="KW-0539">Nucleus</keyword>
<keyword id="KW-0597">Phosphoprotein</keyword>
<keyword id="KW-1185">Reference proteome</keyword>
<organism>
    <name type="scientific">Mus musculus</name>
    <name type="common">Mouse</name>
    <dbReference type="NCBI Taxonomy" id="10090"/>
    <lineage>
        <taxon>Eukaryota</taxon>
        <taxon>Metazoa</taxon>
        <taxon>Chordata</taxon>
        <taxon>Craniata</taxon>
        <taxon>Vertebrata</taxon>
        <taxon>Euteleostomi</taxon>
        <taxon>Mammalia</taxon>
        <taxon>Eutheria</taxon>
        <taxon>Euarchontoglires</taxon>
        <taxon>Glires</taxon>
        <taxon>Rodentia</taxon>
        <taxon>Myomorpha</taxon>
        <taxon>Muroidea</taxon>
        <taxon>Muridae</taxon>
        <taxon>Murinae</taxon>
        <taxon>Mus</taxon>
        <taxon>Mus</taxon>
    </lineage>
</organism>
<evidence type="ECO:0000250" key="1"/>
<evidence type="ECO:0000256" key="2">
    <source>
        <dbReference type="SAM" id="MobiDB-lite"/>
    </source>
</evidence>
<evidence type="ECO:0000269" key="3">
    <source>
    </source>
</evidence>
<evidence type="ECO:0000303" key="4">
    <source>
    </source>
</evidence>
<evidence type="ECO:0000305" key="5"/>
<evidence type="ECO:0007744" key="6">
    <source>
    </source>
</evidence>
<sequence>MERARRRGGGGSGGGRGRGGKNVGGPGLSKSRLYPQAQHSHYPHYSASATPNQSGGTSEIQELASKRVDIQKKRFYLDVKQSSRGRFLKIAEVWIGRGRQDNIRKSKLTLSLSVAAELKDCLGDFIEHYAHLGLKGHRQEHGQSKEQVSRRRQKHSAPSPPVSVGSEEHPHSVLKTDYIERDNRKYYLDLKENQRGRFLRIRQTMMRGTGMIGYFGHSLGQDQTIVLPAQGMIEFRDALVQLIEDYGEGDIEERRCGDDDPLELPEGTSFRVDNKRFYFDVGSNKYGIFLKVSEVRPPYRNTITVPFKAWTRFGENFIKYEEEMRKICNSHKEKRMDGRRASGEEQECLD</sequence>